<proteinExistence type="inferred from homology"/>
<accession>A7FQ40</accession>
<name>RS5_CLOB1</name>
<dbReference type="EMBL" id="CP000726">
    <property type="protein sequence ID" value="ABS32888.1"/>
    <property type="molecule type" value="Genomic_DNA"/>
</dbReference>
<dbReference type="RefSeq" id="WP_003357254.1">
    <property type="nucleotide sequence ID" value="NC_009697.1"/>
</dbReference>
<dbReference type="SMR" id="A7FQ40"/>
<dbReference type="GeneID" id="5185823"/>
<dbReference type="KEGG" id="cba:CLB_3520"/>
<dbReference type="HOGENOM" id="CLU_065898_2_2_9"/>
<dbReference type="GO" id="GO:0015935">
    <property type="term" value="C:small ribosomal subunit"/>
    <property type="evidence" value="ECO:0007669"/>
    <property type="project" value="InterPro"/>
</dbReference>
<dbReference type="GO" id="GO:0019843">
    <property type="term" value="F:rRNA binding"/>
    <property type="evidence" value="ECO:0007669"/>
    <property type="project" value="UniProtKB-UniRule"/>
</dbReference>
<dbReference type="GO" id="GO:0003735">
    <property type="term" value="F:structural constituent of ribosome"/>
    <property type="evidence" value="ECO:0007669"/>
    <property type="project" value="InterPro"/>
</dbReference>
<dbReference type="GO" id="GO:0006412">
    <property type="term" value="P:translation"/>
    <property type="evidence" value="ECO:0007669"/>
    <property type="project" value="UniProtKB-UniRule"/>
</dbReference>
<dbReference type="FunFam" id="3.30.160.20:FF:000001">
    <property type="entry name" value="30S ribosomal protein S5"/>
    <property type="match status" value="1"/>
</dbReference>
<dbReference type="FunFam" id="3.30.230.10:FF:000002">
    <property type="entry name" value="30S ribosomal protein S5"/>
    <property type="match status" value="1"/>
</dbReference>
<dbReference type="Gene3D" id="3.30.160.20">
    <property type="match status" value="1"/>
</dbReference>
<dbReference type="Gene3D" id="3.30.230.10">
    <property type="match status" value="1"/>
</dbReference>
<dbReference type="HAMAP" id="MF_01307_B">
    <property type="entry name" value="Ribosomal_uS5_B"/>
    <property type="match status" value="1"/>
</dbReference>
<dbReference type="InterPro" id="IPR020568">
    <property type="entry name" value="Ribosomal_Su5_D2-typ_SF"/>
</dbReference>
<dbReference type="InterPro" id="IPR000851">
    <property type="entry name" value="Ribosomal_uS5"/>
</dbReference>
<dbReference type="InterPro" id="IPR005712">
    <property type="entry name" value="Ribosomal_uS5_bac-type"/>
</dbReference>
<dbReference type="InterPro" id="IPR005324">
    <property type="entry name" value="Ribosomal_uS5_C"/>
</dbReference>
<dbReference type="InterPro" id="IPR013810">
    <property type="entry name" value="Ribosomal_uS5_N"/>
</dbReference>
<dbReference type="InterPro" id="IPR018192">
    <property type="entry name" value="Ribosomal_uS5_N_CS"/>
</dbReference>
<dbReference type="InterPro" id="IPR014721">
    <property type="entry name" value="Ribsml_uS5_D2-typ_fold_subgr"/>
</dbReference>
<dbReference type="NCBIfam" id="TIGR01021">
    <property type="entry name" value="rpsE_bact"/>
    <property type="match status" value="1"/>
</dbReference>
<dbReference type="PANTHER" id="PTHR48277">
    <property type="entry name" value="MITOCHONDRIAL RIBOSOMAL PROTEIN S5"/>
    <property type="match status" value="1"/>
</dbReference>
<dbReference type="PANTHER" id="PTHR48277:SF1">
    <property type="entry name" value="MITOCHONDRIAL RIBOSOMAL PROTEIN S5"/>
    <property type="match status" value="1"/>
</dbReference>
<dbReference type="Pfam" id="PF00333">
    <property type="entry name" value="Ribosomal_S5"/>
    <property type="match status" value="1"/>
</dbReference>
<dbReference type="Pfam" id="PF03719">
    <property type="entry name" value="Ribosomal_S5_C"/>
    <property type="match status" value="1"/>
</dbReference>
<dbReference type="SUPFAM" id="SSF54768">
    <property type="entry name" value="dsRNA-binding domain-like"/>
    <property type="match status" value="1"/>
</dbReference>
<dbReference type="SUPFAM" id="SSF54211">
    <property type="entry name" value="Ribosomal protein S5 domain 2-like"/>
    <property type="match status" value="1"/>
</dbReference>
<dbReference type="PROSITE" id="PS00585">
    <property type="entry name" value="RIBOSOMAL_S5"/>
    <property type="match status" value="1"/>
</dbReference>
<dbReference type="PROSITE" id="PS50881">
    <property type="entry name" value="S5_DSRBD"/>
    <property type="match status" value="1"/>
</dbReference>
<sequence length="165" mass="17480">MRIDPSTLNLKEKVVHINRVAKVVKGGRNFRFSVLVVVGDEAGHVGVGTGKSIEIPEAIRKAIEDAKKNIVEVKTVGTTVPHDIIGKFGKGEVLIMTAKEGTGVIAGGPVRAVLELAGLKDVRAKSKGSNNPTNMVNATIDGLARLRTVEDIAKLRGKTVEEILG</sequence>
<protein>
    <recommendedName>
        <fullName evidence="1">Small ribosomal subunit protein uS5</fullName>
    </recommendedName>
    <alternativeName>
        <fullName evidence="2">30S ribosomal protein S5</fullName>
    </alternativeName>
</protein>
<organism>
    <name type="scientific">Clostridium botulinum (strain ATCC 19397 / Type A)</name>
    <dbReference type="NCBI Taxonomy" id="441770"/>
    <lineage>
        <taxon>Bacteria</taxon>
        <taxon>Bacillati</taxon>
        <taxon>Bacillota</taxon>
        <taxon>Clostridia</taxon>
        <taxon>Eubacteriales</taxon>
        <taxon>Clostridiaceae</taxon>
        <taxon>Clostridium</taxon>
    </lineage>
</organism>
<reference key="1">
    <citation type="journal article" date="2007" name="PLoS ONE">
        <title>Analysis of the neurotoxin complex genes in Clostridium botulinum A1-A4 and B1 strains: BoNT/A3, /Ba4 and /B1 clusters are located within plasmids.</title>
        <authorList>
            <person name="Smith T.J."/>
            <person name="Hill K.K."/>
            <person name="Foley B.T."/>
            <person name="Detter J.C."/>
            <person name="Munk A.C."/>
            <person name="Bruce D.C."/>
            <person name="Doggett N.A."/>
            <person name="Smith L.A."/>
            <person name="Marks J.D."/>
            <person name="Xie G."/>
            <person name="Brettin T.S."/>
        </authorList>
    </citation>
    <scope>NUCLEOTIDE SEQUENCE [LARGE SCALE GENOMIC DNA]</scope>
    <source>
        <strain>ATCC 19397 / Type A</strain>
    </source>
</reference>
<comment type="function">
    <text evidence="1">With S4 and S12 plays an important role in translational accuracy.</text>
</comment>
<comment type="function">
    <text evidence="1">Located at the back of the 30S subunit body where it stabilizes the conformation of the head with respect to the body.</text>
</comment>
<comment type="subunit">
    <text evidence="1">Part of the 30S ribosomal subunit. Contacts proteins S4 and S8.</text>
</comment>
<comment type="domain">
    <text>The N-terminal domain interacts with the head of the 30S subunit; the C-terminal domain interacts with the body and contacts protein S4. The interaction surface between S4 and S5 is involved in control of translational fidelity.</text>
</comment>
<comment type="similarity">
    <text evidence="1">Belongs to the universal ribosomal protein uS5 family.</text>
</comment>
<evidence type="ECO:0000255" key="1">
    <source>
        <dbReference type="HAMAP-Rule" id="MF_01307"/>
    </source>
</evidence>
<evidence type="ECO:0000305" key="2"/>
<feature type="chain" id="PRO_0000323107" description="Small ribosomal subunit protein uS5">
    <location>
        <begin position="1"/>
        <end position="165"/>
    </location>
</feature>
<feature type="domain" description="S5 DRBM" evidence="1">
    <location>
        <begin position="10"/>
        <end position="73"/>
    </location>
</feature>
<keyword id="KW-0687">Ribonucleoprotein</keyword>
<keyword id="KW-0689">Ribosomal protein</keyword>
<keyword id="KW-0694">RNA-binding</keyword>
<keyword id="KW-0699">rRNA-binding</keyword>
<gene>
    <name evidence="1" type="primary">rpsE</name>
    <name type="ordered locus">CLB_3520</name>
</gene>